<dbReference type="EMBL" id="AK091993">
    <property type="protein sequence ID" value="BAG52459.1"/>
    <property type="molecule type" value="mRNA"/>
</dbReference>
<dbReference type="EMBL" id="AC073344">
    <property type="status" value="NOT_ANNOTATED_CDS"/>
    <property type="molecule type" value="Genomic_DNA"/>
</dbReference>
<dbReference type="EMBL" id="AC093592">
    <property type="protein sequence ID" value="AAY40976.1"/>
    <property type="status" value="ALT_SEQ"/>
    <property type="molecule type" value="Genomic_DNA"/>
</dbReference>
<dbReference type="EMBL" id="CH471056">
    <property type="protein sequence ID" value="EAX04653.1"/>
    <property type="molecule type" value="Genomic_DNA"/>
</dbReference>
<dbReference type="EMBL" id="CH471056">
    <property type="protein sequence ID" value="EAX04654.1"/>
    <property type="molecule type" value="Genomic_DNA"/>
</dbReference>
<dbReference type="EMBL" id="BC020772">
    <property type="protein sequence ID" value="AAH20772.1"/>
    <property type="status" value="ALT_SEQ"/>
    <property type="molecule type" value="mRNA"/>
</dbReference>
<dbReference type="EMBL" id="BC030535">
    <property type="protein sequence ID" value="AAH30535.1"/>
    <property type="molecule type" value="mRNA"/>
</dbReference>
<dbReference type="EMBL" id="AB037851">
    <property type="protein sequence ID" value="BAA92668.1"/>
    <property type="molecule type" value="mRNA"/>
</dbReference>
<dbReference type="EMBL" id="AL133615">
    <property type="protein sequence ID" value="CAB63743.1"/>
    <property type="molecule type" value="mRNA"/>
</dbReference>
<dbReference type="CCDS" id="CCDS47168.1">
    <molecule id="Q9P2B7-1"/>
</dbReference>
<dbReference type="CCDS" id="CCDS75216.1">
    <molecule id="Q9P2B7-2"/>
</dbReference>
<dbReference type="PIR" id="T43472">
    <property type="entry name" value="T43472"/>
</dbReference>
<dbReference type="RefSeq" id="NP_001278962.1">
    <molecule id="Q9P2B7-2"/>
    <property type="nucleotide sequence ID" value="NM_001292033.2"/>
</dbReference>
<dbReference type="RefSeq" id="NP_065878.1">
    <molecule id="Q9P2B7-1"/>
    <property type="nucleotide sequence ID" value="NM_020827.3"/>
</dbReference>
<dbReference type="RefSeq" id="XP_016863972.1">
    <molecule id="Q9P2B7-1"/>
    <property type="nucleotide sequence ID" value="XM_017008483.3"/>
</dbReference>
<dbReference type="RefSeq" id="XP_016863973.1">
    <molecule id="Q9P2B7-1"/>
    <property type="nucleotide sequence ID" value="XM_017008484.3"/>
</dbReference>
<dbReference type="RefSeq" id="XP_016863974.1">
    <property type="nucleotide sequence ID" value="XM_017008485.1"/>
</dbReference>
<dbReference type="RefSeq" id="XP_016863975.1">
    <molecule id="Q9P2B7-1"/>
    <property type="nucleotide sequence ID" value="XM_017008486.3"/>
</dbReference>
<dbReference type="RefSeq" id="XP_047271971.1">
    <molecule id="Q9P2B7-1"/>
    <property type="nucleotide sequence ID" value="XM_047416015.1"/>
</dbReference>
<dbReference type="RefSeq" id="XP_047271972.1">
    <molecule id="Q9P2B7-1"/>
    <property type="nucleotide sequence ID" value="XM_047416016.1"/>
</dbReference>
<dbReference type="SMR" id="Q9P2B7"/>
<dbReference type="BioGRID" id="121639">
    <property type="interactions" value="68"/>
</dbReference>
<dbReference type="FunCoup" id="Q9P2B7">
    <property type="interactions" value="2499"/>
</dbReference>
<dbReference type="IntAct" id="Q9P2B7">
    <property type="interactions" value="51"/>
</dbReference>
<dbReference type="STRING" id="9606.ENSP00000409964"/>
<dbReference type="GlyGen" id="Q9P2B7">
    <property type="glycosylation" value="2 sites, 1 N-linked glycan (1 site)"/>
</dbReference>
<dbReference type="iPTMnet" id="Q9P2B7"/>
<dbReference type="PhosphoSitePlus" id="Q9P2B7"/>
<dbReference type="BioMuta" id="CFAP97"/>
<dbReference type="DMDM" id="160395564"/>
<dbReference type="jPOST" id="Q9P2B7"/>
<dbReference type="MassIVE" id="Q9P2B7"/>
<dbReference type="PaxDb" id="9606-ENSP00000409964"/>
<dbReference type="PeptideAtlas" id="Q9P2B7"/>
<dbReference type="ProteomicsDB" id="83767">
    <molecule id="Q9P2B7-1"/>
</dbReference>
<dbReference type="ProteomicsDB" id="83768">
    <molecule id="Q9P2B7-2"/>
</dbReference>
<dbReference type="Pumba" id="Q9P2B7"/>
<dbReference type="Antibodypedia" id="56002">
    <property type="antibodies" value="29 antibodies from 12 providers"/>
</dbReference>
<dbReference type="DNASU" id="57587"/>
<dbReference type="Ensembl" id="ENST00000458385.7">
    <molecule id="Q9P2B7-1"/>
    <property type="protein sequence ID" value="ENSP00000409964.2"/>
    <property type="gene ID" value="ENSG00000164323.15"/>
</dbReference>
<dbReference type="Ensembl" id="ENST00000514798.1">
    <molecule id="Q9P2B7-2"/>
    <property type="protein sequence ID" value="ENSP00000423312.1"/>
    <property type="gene ID" value="ENSG00000164323.15"/>
</dbReference>
<dbReference type="GeneID" id="57587"/>
<dbReference type="KEGG" id="hsa:57587"/>
<dbReference type="MANE-Select" id="ENST00000458385.7">
    <property type="protein sequence ID" value="ENSP00000409964.2"/>
    <property type="RefSeq nucleotide sequence ID" value="NM_020827.3"/>
    <property type="RefSeq protein sequence ID" value="NP_065878.1"/>
</dbReference>
<dbReference type="UCSC" id="uc003ixf.5">
    <molecule id="Q9P2B7-1"/>
    <property type="organism name" value="human"/>
</dbReference>
<dbReference type="AGR" id="HGNC:29276"/>
<dbReference type="CTD" id="57587"/>
<dbReference type="GeneCards" id="CFAP97"/>
<dbReference type="HGNC" id="HGNC:29276">
    <property type="gene designation" value="CFAP97"/>
</dbReference>
<dbReference type="HPA" id="ENSG00000164323">
    <property type="expression patterns" value="Low tissue specificity"/>
</dbReference>
<dbReference type="MIM" id="616047">
    <property type="type" value="gene"/>
</dbReference>
<dbReference type="neXtProt" id="NX_Q9P2B7"/>
<dbReference type="OpenTargets" id="ENSG00000164323"/>
<dbReference type="PharmGKB" id="PA134887257"/>
<dbReference type="VEuPathDB" id="HostDB:ENSG00000164323"/>
<dbReference type="eggNOG" id="ENOG502S0ZF">
    <property type="taxonomic scope" value="Eukaryota"/>
</dbReference>
<dbReference type="GeneTree" id="ENSGT00390000010356"/>
<dbReference type="HOGENOM" id="CLU_040301_1_0_1"/>
<dbReference type="InParanoid" id="Q9P2B7"/>
<dbReference type="OMA" id="DEKCCEE"/>
<dbReference type="OrthoDB" id="515313at2759"/>
<dbReference type="PAN-GO" id="Q9P2B7">
    <property type="GO annotations" value="1 GO annotation based on evolutionary models"/>
</dbReference>
<dbReference type="PhylomeDB" id="Q9P2B7"/>
<dbReference type="TreeFam" id="TF336369"/>
<dbReference type="PathwayCommons" id="Q9P2B7"/>
<dbReference type="SignaLink" id="Q9P2B7"/>
<dbReference type="BioGRID-ORCS" id="57587">
    <property type="hits" value="36 hits in 1161 CRISPR screens"/>
</dbReference>
<dbReference type="ChiTaRS" id="CFAP97">
    <property type="organism name" value="human"/>
</dbReference>
<dbReference type="GenomeRNAi" id="57587"/>
<dbReference type="Pharos" id="Q9P2B7">
    <property type="development level" value="Tdark"/>
</dbReference>
<dbReference type="PRO" id="PR:Q9P2B7"/>
<dbReference type="Proteomes" id="UP000005640">
    <property type="component" value="Chromosome 4"/>
</dbReference>
<dbReference type="RNAct" id="Q9P2B7">
    <property type="molecule type" value="protein"/>
</dbReference>
<dbReference type="Bgee" id="ENSG00000164323">
    <property type="expression patterns" value="Expressed in endothelial cell and 194 other cell types or tissues"/>
</dbReference>
<dbReference type="ExpressionAtlas" id="Q9P2B7">
    <property type="expression patterns" value="baseline and differential"/>
</dbReference>
<dbReference type="InterPro" id="IPR038791">
    <property type="entry name" value="Cfap97/Hemingway"/>
</dbReference>
<dbReference type="InterPro" id="IPR029488">
    <property type="entry name" value="Hmw/CFAP97"/>
</dbReference>
<dbReference type="PANTHER" id="PTHR23035:SF1">
    <property type="entry name" value="CILIA- AND FLAGELLA-ASSOCIATED PROTEIN 97"/>
    <property type="match status" value="1"/>
</dbReference>
<dbReference type="PANTHER" id="PTHR23035">
    <property type="entry name" value="CILIA- AND FLAGELLA-ASSOCIATED PROTEIN 97-RELATED"/>
    <property type="match status" value="1"/>
</dbReference>
<dbReference type="Pfam" id="PF13879">
    <property type="entry name" value="Hmw_CFAP97"/>
    <property type="match status" value="1"/>
</dbReference>
<evidence type="ECO:0000250" key="1">
    <source>
        <dbReference type="UniProtKB" id="Q66H34"/>
    </source>
</evidence>
<evidence type="ECO:0000250" key="2">
    <source>
        <dbReference type="UniProtKB" id="Q6ZPR1"/>
    </source>
</evidence>
<evidence type="ECO:0000255" key="3"/>
<evidence type="ECO:0000256" key="4">
    <source>
        <dbReference type="SAM" id="MobiDB-lite"/>
    </source>
</evidence>
<evidence type="ECO:0000269" key="5">
    <source>
    </source>
</evidence>
<evidence type="ECO:0000303" key="6">
    <source>
    </source>
</evidence>
<evidence type="ECO:0000305" key="7"/>
<evidence type="ECO:0000312" key="8">
    <source>
        <dbReference type="HGNC" id="HGNC:29276"/>
    </source>
</evidence>
<evidence type="ECO:0007744" key="9">
    <source>
    </source>
</evidence>
<evidence type="ECO:0007744" key="10">
    <source>
    </source>
</evidence>
<evidence type="ECO:0007744" key="11">
    <source>
    </source>
</evidence>
<evidence type="ECO:0007744" key="12">
    <source>
    </source>
</evidence>
<protein>
    <recommendedName>
        <fullName evidence="8">Cilia- and flagella-associated protein 97</fullName>
    </recommendedName>
</protein>
<keyword id="KW-0025">Alternative splicing</keyword>
<keyword id="KW-0175">Coiled coil</keyword>
<keyword id="KW-0597">Phosphoprotein</keyword>
<keyword id="KW-1267">Proteomics identification</keyword>
<keyword id="KW-1185">Reference proteome</keyword>
<comment type="alternative products">
    <event type="alternative splicing"/>
    <isoform>
        <id>Q9P2B7-1</id>
        <name>1</name>
        <sequence type="displayed"/>
    </isoform>
    <isoform>
        <id>Q9P2B7-2</id>
        <name>2</name>
        <sequence type="described" ref="VSP_029098 VSP_029099"/>
    </isoform>
</comment>
<comment type="similarity">
    <text evidence="7">Belongs to the CFAP97 family.</text>
</comment>
<comment type="sequence caution" evidence="7">
    <conflict type="frameshift">
        <sequence resource="EMBL-CDS" id="AAH20772"/>
    </conflict>
</comment>
<comment type="sequence caution" evidence="7">
    <conflict type="miscellaneous discrepancy">
        <sequence resource="EMBL-CDS" id="AAH20772"/>
    </conflict>
    <text>Contaminating sequence. Potential poly-A sequence.</text>
</comment>
<comment type="sequence caution" evidence="7">
    <conflict type="erroneous gene model prediction">
        <sequence resource="EMBL-CDS" id="AAY40976"/>
    </conflict>
</comment>
<gene>
    <name evidence="8" type="primary">CFAP97</name>
    <name evidence="8" type="synonym">KIAA1430</name>
</gene>
<accession>Q9P2B7</accession>
<accession>B3KRP7</accession>
<accession>D3DP60</accession>
<accession>Q05CU1</accession>
<accession>Q4W5M4</accession>
<accession>Q8N6E7</accession>
<accession>Q9UF45</accession>
<proteinExistence type="evidence at protein level"/>
<reference key="1">
    <citation type="journal article" date="2004" name="Nat. Genet.">
        <title>Complete sequencing and characterization of 21,243 full-length human cDNAs.</title>
        <authorList>
            <person name="Ota T."/>
            <person name="Suzuki Y."/>
            <person name="Nishikawa T."/>
            <person name="Otsuki T."/>
            <person name="Sugiyama T."/>
            <person name="Irie R."/>
            <person name="Wakamatsu A."/>
            <person name="Hayashi K."/>
            <person name="Sato H."/>
            <person name="Nagai K."/>
            <person name="Kimura K."/>
            <person name="Makita H."/>
            <person name="Sekine M."/>
            <person name="Obayashi M."/>
            <person name="Nishi T."/>
            <person name="Shibahara T."/>
            <person name="Tanaka T."/>
            <person name="Ishii S."/>
            <person name="Yamamoto J."/>
            <person name="Saito K."/>
            <person name="Kawai Y."/>
            <person name="Isono Y."/>
            <person name="Nakamura Y."/>
            <person name="Nagahari K."/>
            <person name="Murakami K."/>
            <person name="Yasuda T."/>
            <person name="Iwayanagi T."/>
            <person name="Wagatsuma M."/>
            <person name="Shiratori A."/>
            <person name="Sudo H."/>
            <person name="Hosoiri T."/>
            <person name="Kaku Y."/>
            <person name="Kodaira H."/>
            <person name="Kondo H."/>
            <person name="Sugawara M."/>
            <person name="Takahashi M."/>
            <person name="Kanda K."/>
            <person name="Yokoi T."/>
            <person name="Furuya T."/>
            <person name="Kikkawa E."/>
            <person name="Omura Y."/>
            <person name="Abe K."/>
            <person name="Kamihara K."/>
            <person name="Katsuta N."/>
            <person name="Sato K."/>
            <person name="Tanikawa M."/>
            <person name="Yamazaki M."/>
            <person name="Ninomiya K."/>
            <person name="Ishibashi T."/>
            <person name="Yamashita H."/>
            <person name="Murakawa K."/>
            <person name="Fujimori K."/>
            <person name="Tanai H."/>
            <person name="Kimata M."/>
            <person name="Watanabe M."/>
            <person name="Hiraoka S."/>
            <person name="Chiba Y."/>
            <person name="Ishida S."/>
            <person name="Ono Y."/>
            <person name="Takiguchi S."/>
            <person name="Watanabe S."/>
            <person name="Yosida M."/>
            <person name="Hotuta T."/>
            <person name="Kusano J."/>
            <person name="Kanehori K."/>
            <person name="Takahashi-Fujii A."/>
            <person name="Hara H."/>
            <person name="Tanase T.-O."/>
            <person name="Nomura Y."/>
            <person name="Togiya S."/>
            <person name="Komai F."/>
            <person name="Hara R."/>
            <person name="Takeuchi K."/>
            <person name="Arita M."/>
            <person name="Imose N."/>
            <person name="Musashino K."/>
            <person name="Yuuki H."/>
            <person name="Oshima A."/>
            <person name="Sasaki N."/>
            <person name="Aotsuka S."/>
            <person name="Yoshikawa Y."/>
            <person name="Matsunawa H."/>
            <person name="Ichihara T."/>
            <person name="Shiohata N."/>
            <person name="Sano S."/>
            <person name="Moriya S."/>
            <person name="Momiyama H."/>
            <person name="Satoh N."/>
            <person name="Takami S."/>
            <person name="Terashima Y."/>
            <person name="Suzuki O."/>
            <person name="Nakagawa S."/>
            <person name="Senoh A."/>
            <person name="Mizoguchi H."/>
            <person name="Goto Y."/>
            <person name="Shimizu F."/>
            <person name="Wakebe H."/>
            <person name="Hishigaki H."/>
            <person name="Watanabe T."/>
            <person name="Sugiyama A."/>
            <person name="Takemoto M."/>
            <person name="Kawakami B."/>
            <person name="Yamazaki M."/>
            <person name="Watanabe K."/>
            <person name="Kumagai A."/>
            <person name="Itakura S."/>
            <person name="Fukuzumi Y."/>
            <person name="Fujimori Y."/>
            <person name="Komiyama M."/>
            <person name="Tashiro H."/>
            <person name="Tanigami A."/>
            <person name="Fujiwara T."/>
            <person name="Ono T."/>
            <person name="Yamada K."/>
            <person name="Fujii Y."/>
            <person name="Ozaki K."/>
            <person name="Hirao M."/>
            <person name="Ohmori Y."/>
            <person name="Kawabata A."/>
            <person name="Hikiji T."/>
            <person name="Kobatake N."/>
            <person name="Inagaki H."/>
            <person name="Ikema Y."/>
            <person name="Okamoto S."/>
            <person name="Okitani R."/>
            <person name="Kawakami T."/>
            <person name="Noguchi S."/>
            <person name="Itoh T."/>
            <person name="Shigeta K."/>
            <person name="Senba T."/>
            <person name="Matsumura K."/>
            <person name="Nakajima Y."/>
            <person name="Mizuno T."/>
            <person name="Morinaga M."/>
            <person name="Sasaki M."/>
            <person name="Togashi T."/>
            <person name="Oyama M."/>
            <person name="Hata H."/>
            <person name="Watanabe M."/>
            <person name="Komatsu T."/>
            <person name="Mizushima-Sugano J."/>
            <person name="Satoh T."/>
            <person name="Shirai Y."/>
            <person name="Takahashi Y."/>
            <person name="Nakagawa K."/>
            <person name="Okumura K."/>
            <person name="Nagase T."/>
            <person name="Nomura N."/>
            <person name="Kikuchi H."/>
            <person name="Masuho Y."/>
            <person name="Yamashita R."/>
            <person name="Nakai K."/>
            <person name="Yada T."/>
            <person name="Nakamura Y."/>
            <person name="Ohara O."/>
            <person name="Isogai T."/>
            <person name="Sugano S."/>
        </authorList>
    </citation>
    <scope>NUCLEOTIDE SEQUENCE [LARGE SCALE MRNA] (ISOFORM 1)</scope>
    <source>
        <tissue>Liver</tissue>
    </source>
</reference>
<reference key="2">
    <citation type="journal article" date="2005" name="Nature">
        <title>Generation and annotation of the DNA sequences of human chromosomes 2 and 4.</title>
        <authorList>
            <person name="Hillier L.W."/>
            <person name="Graves T.A."/>
            <person name="Fulton R.S."/>
            <person name="Fulton L.A."/>
            <person name="Pepin K.H."/>
            <person name="Minx P."/>
            <person name="Wagner-McPherson C."/>
            <person name="Layman D."/>
            <person name="Wylie K."/>
            <person name="Sekhon M."/>
            <person name="Becker M.C."/>
            <person name="Fewell G.A."/>
            <person name="Delehaunty K.D."/>
            <person name="Miner T.L."/>
            <person name="Nash W.E."/>
            <person name="Kremitzki C."/>
            <person name="Oddy L."/>
            <person name="Du H."/>
            <person name="Sun H."/>
            <person name="Bradshaw-Cordum H."/>
            <person name="Ali J."/>
            <person name="Carter J."/>
            <person name="Cordes M."/>
            <person name="Harris A."/>
            <person name="Isak A."/>
            <person name="van Brunt A."/>
            <person name="Nguyen C."/>
            <person name="Du F."/>
            <person name="Courtney L."/>
            <person name="Kalicki J."/>
            <person name="Ozersky P."/>
            <person name="Abbott S."/>
            <person name="Armstrong J."/>
            <person name="Belter E.A."/>
            <person name="Caruso L."/>
            <person name="Cedroni M."/>
            <person name="Cotton M."/>
            <person name="Davidson T."/>
            <person name="Desai A."/>
            <person name="Elliott G."/>
            <person name="Erb T."/>
            <person name="Fronick C."/>
            <person name="Gaige T."/>
            <person name="Haakenson W."/>
            <person name="Haglund K."/>
            <person name="Holmes A."/>
            <person name="Harkins R."/>
            <person name="Kim K."/>
            <person name="Kruchowski S.S."/>
            <person name="Strong C.M."/>
            <person name="Grewal N."/>
            <person name="Goyea E."/>
            <person name="Hou S."/>
            <person name="Levy A."/>
            <person name="Martinka S."/>
            <person name="Mead K."/>
            <person name="McLellan M.D."/>
            <person name="Meyer R."/>
            <person name="Randall-Maher J."/>
            <person name="Tomlinson C."/>
            <person name="Dauphin-Kohlberg S."/>
            <person name="Kozlowicz-Reilly A."/>
            <person name="Shah N."/>
            <person name="Swearengen-Shahid S."/>
            <person name="Snider J."/>
            <person name="Strong J.T."/>
            <person name="Thompson J."/>
            <person name="Yoakum M."/>
            <person name="Leonard S."/>
            <person name="Pearman C."/>
            <person name="Trani L."/>
            <person name="Radionenko M."/>
            <person name="Waligorski J.E."/>
            <person name="Wang C."/>
            <person name="Rock S.M."/>
            <person name="Tin-Wollam A.-M."/>
            <person name="Maupin R."/>
            <person name="Latreille P."/>
            <person name="Wendl M.C."/>
            <person name="Yang S.-P."/>
            <person name="Pohl C."/>
            <person name="Wallis J.W."/>
            <person name="Spieth J."/>
            <person name="Bieri T.A."/>
            <person name="Berkowicz N."/>
            <person name="Nelson J.O."/>
            <person name="Osborne J."/>
            <person name="Ding L."/>
            <person name="Meyer R."/>
            <person name="Sabo A."/>
            <person name="Shotland Y."/>
            <person name="Sinha P."/>
            <person name="Wohldmann P.E."/>
            <person name="Cook L.L."/>
            <person name="Hickenbotham M.T."/>
            <person name="Eldred J."/>
            <person name="Williams D."/>
            <person name="Jones T.A."/>
            <person name="She X."/>
            <person name="Ciccarelli F.D."/>
            <person name="Izaurralde E."/>
            <person name="Taylor J."/>
            <person name="Schmutz J."/>
            <person name="Myers R.M."/>
            <person name="Cox D.R."/>
            <person name="Huang X."/>
            <person name="McPherson J.D."/>
            <person name="Mardis E.R."/>
            <person name="Clifton S.W."/>
            <person name="Warren W.C."/>
            <person name="Chinwalla A.T."/>
            <person name="Eddy S.R."/>
            <person name="Marra M.A."/>
            <person name="Ovcharenko I."/>
            <person name="Furey T.S."/>
            <person name="Miller W."/>
            <person name="Eichler E.E."/>
            <person name="Bork P."/>
            <person name="Suyama M."/>
            <person name="Torrents D."/>
            <person name="Waterston R.H."/>
            <person name="Wilson R.K."/>
        </authorList>
    </citation>
    <scope>NUCLEOTIDE SEQUENCE [LARGE SCALE GENOMIC DNA]</scope>
</reference>
<reference key="3">
    <citation type="submission" date="2005-09" db="EMBL/GenBank/DDBJ databases">
        <authorList>
            <person name="Mural R.J."/>
            <person name="Istrail S."/>
            <person name="Sutton G.G."/>
            <person name="Florea L."/>
            <person name="Halpern A.L."/>
            <person name="Mobarry C.M."/>
            <person name="Lippert R."/>
            <person name="Walenz B."/>
            <person name="Shatkay H."/>
            <person name="Dew I."/>
            <person name="Miller J.R."/>
            <person name="Flanigan M.J."/>
            <person name="Edwards N.J."/>
            <person name="Bolanos R."/>
            <person name="Fasulo D."/>
            <person name="Halldorsson B.V."/>
            <person name="Hannenhalli S."/>
            <person name="Turner R."/>
            <person name="Yooseph S."/>
            <person name="Lu F."/>
            <person name="Nusskern D.R."/>
            <person name="Shue B.C."/>
            <person name="Zheng X.H."/>
            <person name="Zhong F."/>
            <person name="Delcher A.L."/>
            <person name="Huson D.H."/>
            <person name="Kravitz S.A."/>
            <person name="Mouchard L."/>
            <person name="Reinert K."/>
            <person name="Remington K.A."/>
            <person name="Clark A.G."/>
            <person name="Waterman M.S."/>
            <person name="Eichler E.E."/>
            <person name="Adams M.D."/>
            <person name="Hunkapiller M.W."/>
            <person name="Myers E.W."/>
            <person name="Venter J.C."/>
        </authorList>
    </citation>
    <scope>NUCLEOTIDE SEQUENCE [LARGE SCALE GENOMIC DNA]</scope>
</reference>
<reference key="4">
    <citation type="journal article" date="2004" name="Genome Res.">
        <title>The status, quality, and expansion of the NIH full-length cDNA project: the Mammalian Gene Collection (MGC).</title>
        <authorList>
            <consortium name="The MGC Project Team"/>
        </authorList>
    </citation>
    <scope>NUCLEOTIDE SEQUENCE [LARGE SCALE MRNA] (ISOFORMS 1 AND 2)</scope>
    <scope>VARIANT ALA-238</scope>
    <source>
        <tissue>Brain</tissue>
        <tissue>Testis</tissue>
    </source>
</reference>
<reference key="5">
    <citation type="journal article" date="2000" name="DNA Res.">
        <title>Prediction of the coding sequences of unidentified human genes. XVI. The complete sequences of 150 new cDNA clones from brain which code for large proteins in vitro.</title>
        <authorList>
            <person name="Nagase T."/>
            <person name="Kikuno R."/>
            <person name="Ishikawa K."/>
            <person name="Hirosawa M."/>
            <person name="Ohara O."/>
        </authorList>
    </citation>
    <scope>NUCLEOTIDE SEQUENCE [LARGE SCALE MRNA] OF 6-532 (ISOFORM 1)</scope>
    <source>
        <tissue>Brain</tissue>
    </source>
</reference>
<reference key="6">
    <citation type="journal article" date="2007" name="BMC Genomics">
        <title>The full-ORF clone resource of the German cDNA consortium.</title>
        <authorList>
            <person name="Bechtel S."/>
            <person name="Rosenfelder H."/>
            <person name="Duda A."/>
            <person name="Schmidt C.P."/>
            <person name="Ernst U."/>
            <person name="Wellenreuther R."/>
            <person name="Mehrle A."/>
            <person name="Schuster C."/>
            <person name="Bahr A."/>
            <person name="Bloecker H."/>
            <person name="Heubner D."/>
            <person name="Hoerlein A."/>
            <person name="Michel G."/>
            <person name="Wedler H."/>
            <person name="Koehrer K."/>
            <person name="Ottenwaelder B."/>
            <person name="Poustka A."/>
            <person name="Wiemann S."/>
            <person name="Schupp I."/>
        </authorList>
    </citation>
    <scope>NUCLEOTIDE SEQUENCE [LARGE SCALE MRNA] OF 296-532 (ISOFORM 1)</scope>
    <source>
        <tissue>Testis</tissue>
    </source>
</reference>
<reference key="7">
    <citation type="journal article" date="2008" name="Proc. Natl. Acad. Sci. U.S.A.">
        <title>A quantitative atlas of mitotic phosphorylation.</title>
        <authorList>
            <person name="Dephoure N."/>
            <person name="Zhou C."/>
            <person name="Villen J."/>
            <person name="Beausoleil S.A."/>
            <person name="Bakalarski C.E."/>
            <person name="Elledge S.J."/>
            <person name="Gygi S.P."/>
        </authorList>
    </citation>
    <scope>PHOSPHORYLATION [LARGE SCALE ANALYSIS] AT THR-133; SER-138 AND SER-139</scope>
    <scope>IDENTIFICATION BY MASS SPECTROMETRY [LARGE SCALE ANALYSIS]</scope>
    <source>
        <tissue>Cervix carcinoma</tissue>
    </source>
</reference>
<reference key="8">
    <citation type="journal article" date="2010" name="Sci. Signal.">
        <title>Quantitative phosphoproteomics reveals widespread full phosphorylation site occupancy during mitosis.</title>
        <authorList>
            <person name="Olsen J.V."/>
            <person name="Vermeulen M."/>
            <person name="Santamaria A."/>
            <person name="Kumar C."/>
            <person name="Miller M.L."/>
            <person name="Jensen L.J."/>
            <person name="Gnad F."/>
            <person name="Cox J."/>
            <person name="Jensen T.S."/>
            <person name="Nigg E.A."/>
            <person name="Brunak S."/>
            <person name="Mann M."/>
        </authorList>
    </citation>
    <scope>PHOSPHORYLATION [LARGE SCALE ANALYSIS] AT SER-218</scope>
    <scope>IDENTIFICATION BY MASS SPECTROMETRY [LARGE SCALE ANALYSIS]</scope>
    <source>
        <tissue>Cervix carcinoma</tissue>
    </source>
</reference>
<reference key="9">
    <citation type="journal article" date="2011" name="BMC Syst. Biol.">
        <title>Initial characterization of the human central proteome.</title>
        <authorList>
            <person name="Burkard T.R."/>
            <person name="Planyavsky M."/>
            <person name="Kaupe I."/>
            <person name="Breitwieser F.P."/>
            <person name="Buerckstuemmer T."/>
            <person name="Bennett K.L."/>
            <person name="Superti-Furga G."/>
            <person name="Colinge J."/>
        </authorList>
    </citation>
    <scope>IDENTIFICATION BY MASS SPECTROMETRY [LARGE SCALE ANALYSIS]</scope>
</reference>
<reference key="10">
    <citation type="journal article" date="2011" name="Sci. Signal.">
        <title>System-wide temporal characterization of the proteome and phosphoproteome of human embryonic stem cell differentiation.</title>
        <authorList>
            <person name="Rigbolt K.T."/>
            <person name="Prokhorova T.A."/>
            <person name="Akimov V."/>
            <person name="Henningsen J."/>
            <person name="Johansen P.T."/>
            <person name="Kratchmarova I."/>
            <person name="Kassem M."/>
            <person name="Mann M."/>
            <person name="Olsen J.V."/>
            <person name="Blagoev B."/>
        </authorList>
    </citation>
    <scope>PHOSPHORYLATION [LARGE SCALE ANALYSIS] AT SER-218</scope>
    <scope>IDENTIFICATION BY MASS SPECTROMETRY [LARGE SCALE ANALYSIS]</scope>
</reference>
<reference key="11">
    <citation type="journal article" date="2013" name="J. Proteome Res.">
        <title>Toward a comprehensive characterization of a human cancer cell phosphoproteome.</title>
        <authorList>
            <person name="Zhou H."/>
            <person name="Di Palma S."/>
            <person name="Preisinger C."/>
            <person name="Peng M."/>
            <person name="Polat A.N."/>
            <person name="Heck A.J."/>
            <person name="Mohammed S."/>
        </authorList>
    </citation>
    <scope>PHOSPHORYLATION [LARGE SCALE ANALYSIS] AT SER-218 AND SER-330</scope>
    <scope>IDENTIFICATION BY MASS SPECTROMETRY [LARGE SCALE ANALYSIS]</scope>
    <source>
        <tissue>Cervix carcinoma</tissue>
        <tissue>Erythroleukemia</tissue>
    </source>
</reference>
<organism>
    <name type="scientific">Homo sapiens</name>
    <name type="common">Human</name>
    <dbReference type="NCBI Taxonomy" id="9606"/>
    <lineage>
        <taxon>Eukaryota</taxon>
        <taxon>Metazoa</taxon>
        <taxon>Chordata</taxon>
        <taxon>Craniata</taxon>
        <taxon>Vertebrata</taxon>
        <taxon>Euteleostomi</taxon>
        <taxon>Mammalia</taxon>
        <taxon>Eutheria</taxon>
        <taxon>Euarchontoglires</taxon>
        <taxon>Primates</taxon>
        <taxon>Haplorrhini</taxon>
        <taxon>Catarrhini</taxon>
        <taxon>Hominidae</taxon>
        <taxon>Homo</taxon>
    </lineage>
</organism>
<name>CFA97_HUMAN</name>
<feature type="chain" id="PRO_0000309224" description="Cilia- and flagella-associated protein 97" evidence="7">
    <location>
        <begin position="1"/>
        <end position="532"/>
    </location>
</feature>
<feature type="region of interest" description="Disordered" evidence="4">
    <location>
        <begin position="28"/>
        <end position="83"/>
    </location>
</feature>
<feature type="region of interest" description="Disordered" evidence="4">
    <location>
        <begin position="116"/>
        <end position="263"/>
    </location>
</feature>
<feature type="region of interest" description="Disordered" evidence="4">
    <location>
        <begin position="306"/>
        <end position="333"/>
    </location>
</feature>
<feature type="region of interest" description="Disordered" evidence="4">
    <location>
        <begin position="398"/>
        <end position="421"/>
    </location>
</feature>
<feature type="region of interest" description="Disordered" evidence="4">
    <location>
        <begin position="485"/>
        <end position="532"/>
    </location>
</feature>
<feature type="coiled-coil region" evidence="3">
    <location>
        <begin position="374"/>
        <end position="450"/>
    </location>
</feature>
<feature type="compositionally biased region" description="Basic and acidic residues" evidence="4">
    <location>
        <begin position="35"/>
        <end position="49"/>
    </location>
</feature>
<feature type="compositionally biased region" description="Polar residues" evidence="4">
    <location>
        <begin position="50"/>
        <end position="63"/>
    </location>
</feature>
<feature type="compositionally biased region" description="Basic and acidic residues" evidence="4">
    <location>
        <begin position="67"/>
        <end position="82"/>
    </location>
</feature>
<feature type="compositionally biased region" description="Acidic residues" evidence="4">
    <location>
        <begin position="127"/>
        <end position="139"/>
    </location>
</feature>
<feature type="compositionally biased region" description="Low complexity" evidence="4">
    <location>
        <begin position="170"/>
        <end position="185"/>
    </location>
</feature>
<feature type="compositionally biased region" description="Low complexity" evidence="4">
    <location>
        <begin position="194"/>
        <end position="205"/>
    </location>
</feature>
<feature type="compositionally biased region" description="Polar residues" evidence="4">
    <location>
        <begin position="227"/>
        <end position="239"/>
    </location>
</feature>
<feature type="compositionally biased region" description="Polar residues" evidence="4">
    <location>
        <begin position="253"/>
        <end position="263"/>
    </location>
</feature>
<feature type="compositionally biased region" description="Low complexity" evidence="4">
    <location>
        <begin position="320"/>
        <end position="329"/>
    </location>
</feature>
<feature type="compositionally biased region" description="Polar residues" evidence="4">
    <location>
        <begin position="493"/>
        <end position="503"/>
    </location>
</feature>
<feature type="modified residue" description="Phosphoserine" evidence="2">
    <location>
        <position position="19"/>
    </location>
</feature>
<feature type="modified residue" description="Phosphothreonine" evidence="9">
    <location>
        <position position="133"/>
    </location>
</feature>
<feature type="modified residue" description="Phosphoserine" evidence="9">
    <location>
        <position position="138"/>
    </location>
</feature>
<feature type="modified residue" description="Phosphoserine" evidence="9">
    <location>
        <position position="139"/>
    </location>
</feature>
<feature type="modified residue" description="Phosphoserine" evidence="10 11 12">
    <location>
        <position position="218"/>
    </location>
</feature>
<feature type="modified residue" description="Phosphoserine" evidence="1">
    <location>
        <position position="248"/>
    </location>
</feature>
<feature type="modified residue" description="Phosphoserine" evidence="12">
    <location>
        <position position="330"/>
    </location>
</feature>
<feature type="splice variant" id="VSP_029098" description="In isoform 2." evidence="6">
    <original>ALLKRLEAVKPTV</original>
    <variation>TISLCHPGWSAVT</variation>
    <location>
        <begin position="441"/>
        <end position="453"/>
    </location>
</feature>
<feature type="splice variant" id="VSP_029099" description="In isoform 2." evidence="6">
    <location>
        <begin position="454"/>
        <end position="532"/>
    </location>
</feature>
<feature type="sequence variant" id="VAR_036915" description="In dbSNP:rs1133657." evidence="5">
    <original>T</original>
    <variation>A</variation>
    <location>
        <position position="238"/>
    </location>
</feature>
<feature type="sequence variant" id="VAR_036916" description="In dbSNP:rs6820332.">
    <original>L</original>
    <variation>S</variation>
    <location>
        <position position="443"/>
    </location>
</feature>
<feature type="sequence conflict" description="In Ref. 4; AAH30535." evidence="7" ref="4">
    <original>D</original>
    <variation>T</variation>
    <location>
        <position position="512"/>
    </location>
</feature>
<sequence>MDQFGDILEGEVDHSFFDSDFEEGKKCETNSVFDKQNDDPKERIDKDTKNVNSNTGMQTTENYLTEKGNERNVKFPPEHPVENDVTQTVSSFSLPASSRSKKLCDVTTGLKIHVSIPNRIPKIVKEGEDDYYTDGEESSDDGKKYHVKSKSAKPSTNVKKSIRKKYCKVSSSSSSSLSSSSSGSGTDCLDAGSDSHLSDSSPSSKSSKKHVSGITLLSPKHKYKSGIKSTETQPSSTTPKCGHYPEESEDTVTDVSPLSTPDISPLQSFELGIANDQKVKIKKQENVSQEIYEDVEDLKNNSKYLKAAKKGKEKHEPDVSSKSSSVLDSSLDHRHKQKVLHDTMDLNHLLKAFLQLDKKGPQKHHFDQPSVAPGKNYSFTREEVRQIDRENQRLLKELSRQAEKPGSKSTIPRSADHPPKLYHSALNRQKEQQRIERENLALLKRLEAVKPTVGMKRSEQLMDYHRNMGYLNSSPLSRRARSTLGQYSPLRASRTSSATSGLSCRSERSAVDPSSGHPRRRPKPPNVRTAWL</sequence>